<gene>
    <name evidence="1" type="primary">pyrH</name>
    <name type="synonym">smbA</name>
    <name type="ordered locus">SAR1234</name>
</gene>
<name>PYRH_STAAR</name>
<proteinExistence type="inferred from homology"/>
<accession>Q6GHH7</accession>
<organism>
    <name type="scientific">Staphylococcus aureus (strain MRSA252)</name>
    <dbReference type="NCBI Taxonomy" id="282458"/>
    <lineage>
        <taxon>Bacteria</taxon>
        <taxon>Bacillati</taxon>
        <taxon>Bacillota</taxon>
        <taxon>Bacilli</taxon>
        <taxon>Bacillales</taxon>
        <taxon>Staphylococcaceae</taxon>
        <taxon>Staphylococcus</taxon>
    </lineage>
</organism>
<reference key="1">
    <citation type="journal article" date="2004" name="Proc. Natl. Acad. Sci. U.S.A.">
        <title>Complete genomes of two clinical Staphylococcus aureus strains: evidence for the rapid evolution of virulence and drug resistance.</title>
        <authorList>
            <person name="Holden M.T.G."/>
            <person name="Feil E.J."/>
            <person name="Lindsay J.A."/>
            <person name="Peacock S.J."/>
            <person name="Day N.P.J."/>
            <person name="Enright M.C."/>
            <person name="Foster T.J."/>
            <person name="Moore C.E."/>
            <person name="Hurst L."/>
            <person name="Atkin R."/>
            <person name="Barron A."/>
            <person name="Bason N."/>
            <person name="Bentley S.D."/>
            <person name="Chillingworth C."/>
            <person name="Chillingworth T."/>
            <person name="Churcher C."/>
            <person name="Clark L."/>
            <person name="Corton C."/>
            <person name="Cronin A."/>
            <person name="Doggett J."/>
            <person name="Dowd L."/>
            <person name="Feltwell T."/>
            <person name="Hance Z."/>
            <person name="Harris B."/>
            <person name="Hauser H."/>
            <person name="Holroyd S."/>
            <person name="Jagels K."/>
            <person name="James K.D."/>
            <person name="Lennard N."/>
            <person name="Line A."/>
            <person name="Mayes R."/>
            <person name="Moule S."/>
            <person name="Mungall K."/>
            <person name="Ormond D."/>
            <person name="Quail M.A."/>
            <person name="Rabbinowitsch E."/>
            <person name="Rutherford K.M."/>
            <person name="Sanders M."/>
            <person name="Sharp S."/>
            <person name="Simmonds M."/>
            <person name="Stevens K."/>
            <person name="Whitehead S."/>
            <person name="Barrell B.G."/>
            <person name="Spratt B.G."/>
            <person name="Parkhill J."/>
        </authorList>
    </citation>
    <scope>NUCLEOTIDE SEQUENCE [LARGE SCALE GENOMIC DNA]</scope>
    <source>
        <strain>MRSA252</strain>
    </source>
</reference>
<feature type="chain" id="PRO_0000143884" description="Uridylate kinase">
    <location>
        <begin position="1"/>
        <end position="240"/>
    </location>
</feature>
<feature type="region of interest" description="Involved in allosteric activation by GTP" evidence="1">
    <location>
        <begin position="21"/>
        <end position="26"/>
    </location>
</feature>
<feature type="binding site" evidence="1">
    <location>
        <begin position="13"/>
        <end position="16"/>
    </location>
    <ligand>
        <name>ATP</name>
        <dbReference type="ChEBI" id="CHEBI:30616"/>
    </ligand>
</feature>
<feature type="binding site" evidence="1">
    <location>
        <position position="55"/>
    </location>
    <ligand>
        <name>UMP</name>
        <dbReference type="ChEBI" id="CHEBI:57865"/>
    </ligand>
</feature>
<feature type="binding site" evidence="1">
    <location>
        <position position="56"/>
    </location>
    <ligand>
        <name>ATP</name>
        <dbReference type="ChEBI" id="CHEBI:30616"/>
    </ligand>
</feature>
<feature type="binding site" evidence="1">
    <location>
        <position position="60"/>
    </location>
    <ligand>
        <name>ATP</name>
        <dbReference type="ChEBI" id="CHEBI:30616"/>
    </ligand>
</feature>
<feature type="binding site" evidence="1">
    <location>
        <position position="75"/>
    </location>
    <ligand>
        <name>UMP</name>
        <dbReference type="ChEBI" id="CHEBI:57865"/>
    </ligand>
</feature>
<feature type="binding site" evidence="1">
    <location>
        <begin position="136"/>
        <end position="143"/>
    </location>
    <ligand>
        <name>UMP</name>
        <dbReference type="ChEBI" id="CHEBI:57865"/>
    </ligand>
</feature>
<feature type="binding site" evidence="1">
    <location>
        <position position="164"/>
    </location>
    <ligand>
        <name>ATP</name>
        <dbReference type="ChEBI" id="CHEBI:30616"/>
    </ligand>
</feature>
<feature type="binding site" evidence="1">
    <location>
        <position position="170"/>
    </location>
    <ligand>
        <name>ATP</name>
        <dbReference type="ChEBI" id="CHEBI:30616"/>
    </ligand>
</feature>
<feature type="binding site" evidence="1">
    <location>
        <position position="173"/>
    </location>
    <ligand>
        <name>ATP</name>
        <dbReference type="ChEBI" id="CHEBI:30616"/>
    </ligand>
</feature>
<comment type="function">
    <text evidence="1">Catalyzes the reversible phosphorylation of UMP to UDP.</text>
</comment>
<comment type="catalytic activity">
    <reaction evidence="1">
        <text>UMP + ATP = UDP + ADP</text>
        <dbReference type="Rhea" id="RHEA:24400"/>
        <dbReference type="ChEBI" id="CHEBI:30616"/>
        <dbReference type="ChEBI" id="CHEBI:57865"/>
        <dbReference type="ChEBI" id="CHEBI:58223"/>
        <dbReference type="ChEBI" id="CHEBI:456216"/>
        <dbReference type="EC" id="2.7.4.22"/>
    </reaction>
</comment>
<comment type="activity regulation">
    <text evidence="1">Allosterically activated by GTP. Inhibited by UTP.</text>
</comment>
<comment type="pathway">
    <text evidence="1">Pyrimidine metabolism; CTP biosynthesis via de novo pathway; UDP from UMP (UMPK route): step 1/1.</text>
</comment>
<comment type="subunit">
    <text evidence="1">Homohexamer.</text>
</comment>
<comment type="subcellular location">
    <subcellularLocation>
        <location evidence="1">Cytoplasm</location>
    </subcellularLocation>
</comment>
<comment type="similarity">
    <text evidence="1">Belongs to the UMP kinase family.</text>
</comment>
<keyword id="KW-0021">Allosteric enzyme</keyword>
<keyword id="KW-0067">ATP-binding</keyword>
<keyword id="KW-0963">Cytoplasm</keyword>
<keyword id="KW-0418">Kinase</keyword>
<keyword id="KW-0547">Nucleotide-binding</keyword>
<keyword id="KW-0665">Pyrimidine biosynthesis</keyword>
<keyword id="KW-0808">Transferase</keyword>
<protein>
    <recommendedName>
        <fullName evidence="1">Uridylate kinase</fullName>
        <shortName evidence="1">UK</shortName>
        <ecNumber evidence="1">2.7.4.22</ecNumber>
    </recommendedName>
    <alternativeName>
        <fullName evidence="1">Uridine monophosphate kinase</fullName>
        <shortName evidence="1">UMP kinase</shortName>
        <shortName evidence="1">UMPK</shortName>
    </alternativeName>
</protein>
<evidence type="ECO:0000255" key="1">
    <source>
        <dbReference type="HAMAP-Rule" id="MF_01220"/>
    </source>
</evidence>
<dbReference type="EC" id="2.7.4.22" evidence="1"/>
<dbReference type="EMBL" id="BX571856">
    <property type="protein sequence ID" value="CAG40236.1"/>
    <property type="molecule type" value="Genomic_DNA"/>
</dbReference>
<dbReference type="RefSeq" id="WP_000057330.1">
    <property type="nucleotide sequence ID" value="NC_002952.2"/>
</dbReference>
<dbReference type="SMR" id="Q6GHH7"/>
<dbReference type="GeneID" id="98345574"/>
<dbReference type="KEGG" id="sar:SAR1234"/>
<dbReference type="HOGENOM" id="CLU_033861_0_0_9"/>
<dbReference type="UniPathway" id="UPA00159">
    <property type="reaction ID" value="UER00275"/>
</dbReference>
<dbReference type="Proteomes" id="UP000000596">
    <property type="component" value="Chromosome"/>
</dbReference>
<dbReference type="GO" id="GO:0005737">
    <property type="term" value="C:cytoplasm"/>
    <property type="evidence" value="ECO:0007669"/>
    <property type="project" value="UniProtKB-SubCell"/>
</dbReference>
<dbReference type="GO" id="GO:0005524">
    <property type="term" value="F:ATP binding"/>
    <property type="evidence" value="ECO:0007669"/>
    <property type="project" value="UniProtKB-KW"/>
</dbReference>
<dbReference type="GO" id="GO:0033862">
    <property type="term" value="F:UMP kinase activity"/>
    <property type="evidence" value="ECO:0007669"/>
    <property type="project" value="UniProtKB-EC"/>
</dbReference>
<dbReference type="GO" id="GO:0044210">
    <property type="term" value="P:'de novo' CTP biosynthetic process"/>
    <property type="evidence" value="ECO:0007669"/>
    <property type="project" value="UniProtKB-UniRule"/>
</dbReference>
<dbReference type="GO" id="GO:0006225">
    <property type="term" value="P:UDP biosynthetic process"/>
    <property type="evidence" value="ECO:0007669"/>
    <property type="project" value="TreeGrafter"/>
</dbReference>
<dbReference type="CDD" id="cd04254">
    <property type="entry name" value="AAK_UMPK-PyrH-Ec"/>
    <property type="match status" value="1"/>
</dbReference>
<dbReference type="FunFam" id="3.40.1160.10:FF:000001">
    <property type="entry name" value="Uridylate kinase"/>
    <property type="match status" value="1"/>
</dbReference>
<dbReference type="Gene3D" id="3.40.1160.10">
    <property type="entry name" value="Acetylglutamate kinase-like"/>
    <property type="match status" value="1"/>
</dbReference>
<dbReference type="HAMAP" id="MF_01220_B">
    <property type="entry name" value="PyrH_B"/>
    <property type="match status" value="1"/>
</dbReference>
<dbReference type="InterPro" id="IPR036393">
    <property type="entry name" value="AceGlu_kinase-like_sf"/>
</dbReference>
<dbReference type="InterPro" id="IPR001048">
    <property type="entry name" value="Asp/Glu/Uridylate_kinase"/>
</dbReference>
<dbReference type="InterPro" id="IPR011817">
    <property type="entry name" value="Uridylate_kinase"/>
</dbReference>
<dbReference type="InterPro" id="IPR015963">
    <property type="entry name" value="Uridylate_kinase_bac"/>
</dbReference>
<dbReference type="NCBIfam" id="TIGR02075">
    <property type="entry name" value="pyrH_bact"/>
    <property type="match status" value="1"/>
</dbReference>
<dbReference type="PANTHER" id="PTHR42833">
    <property type="entry name" value="URIDYLATE KINASE"/>
    <property type="match status" value="1"/>
</dbReference>
<dbReference type="PANTHER" id="PTHR42833:SF4">
    <property type="entry name" value="URIDYLATE KINASE PUMPKIN, CHLOROPLASTIC"/>
    <property type="match status" value="1"/>
</dbReference>
<dbReference type="Pfam" id="PF00696">
    <property type="entry name" value="AA_kinase"/>
    <property type="match status" value="1"/>
</dbReference>
<dbReference type="PIRSF" id="PIRSF005650">
    <property type="entry name" value="Uridylate_kin"/>
    <property type="match status" value="1"/>
</dbReference>
<dbReference type="SUPFAM" id="SSF53633">
    <property type="entry name" value="Carbamate kinase-like"/>
    <property type="match status" value="1"/>
</dbReference>
<sequence length="240" mass="26145">MAQISKYKRVVLKLSGEALAGEKGFGINPVIIKSVAEQVAEVAKMDCEIAVIVGGGNIWRGKTGSDLGMDRGTADYMGMLATVMNALALQDSLEQLDCDTRVLTSIEMKQVAEPYIRRRAIRHLEKKRVVIFAAGIGNPYFSTDTTAALRAAEVEADVILMGKNNVDGVYSADPKVNKDAVKYEHLTHIQMLQEGLQVMDSTASSFCMDNNIPLTVFSIMEEGNIKRAVMGEKIGTLITK</sequence>